<reference key="1">
    <citation type="journal article" date="2005" name="PLoS Biol.">
        <title>The genomes of Oryza sativa: a history of duplications.</title>
        <authorList>
            <person name="Yu J."/>
            <person name="Wang J."/>
            <person name="Lin W."/>
            <person name="Li S."/>
            <person name="Li H."/>
            <person name="Zhou J."/>
            <person name="Ni P."/>
            <person name="Dong W."/>
            <person name="Hu S."/>
            <person name="Zeng C."/>
            <person name="Zhang J."/>
            <person name="Zhang Y."/>
            <person name="Li R."/>
            <person name="Xu Z."/>
            <person name="Li S."/>
            <person name="Li X."/>
            <person name="Zheng H."/>
            <person name="Cong L."/>
            <person name="Lin L."/>
            <person name="Yin J."/>
            <person name="Geng J."/>
            <person name="Li G."/>
            <person name="Shi J."/>
            <person name="Liu J."/>
            <person name="Lv H."/>
            <person name="Li J."/>
            <person name="Wang J."/>
            <person name="Deng Y."/>
            <person name="Ran L."/>
            <person name="Shi X."/>
            <person name="Wang X."/>
            <person name="Wu Q."/>
            <person name="Li C."/>
            <person name="Ren X."/>
            <person name="Wang J."/>
            <person name="Wang X."/>
            <person name="Li D."/>
            <person name="Liu D."/>
            <person name="Zhang X."/>
            <person name="Ji Z."/>
            <person name="Zhao W."/>
            <person name="Sun Y."/>
            <person name="Zhang Z."/>
            <person name="Bao J."/>
            <person name="Han Y."/>
            <person name="Dong L."/>
            <person name="Ji J."/>
            <person name="Chen P."/>
            <person name="Wu S."/>
            <person name="Liu J."/>
            <person name="Xiao Y."/>
            <person name="Bu D."/>
            <person name="Tan J."/>
            <person name="Yang L."/>
            <person name="Ye C."/>
            <person name="Zhang J."/>
            <person name="Xu J."/>
            <person name="Zhou Y."/>
            <person name="Yu Y."/>
            <person name="Zhang B."/>
            <person name="Zhuang S."/>
            <person name="Wei H."/>
            <person name="Liu B."/>
            <person name="Lei M."/>
            <person name="Yu H."/>
            <person name="Li Y."/>
            <person name="Xu H."/>
            <person name="Wei S."/>
            <person name="He X."/>
            <person name="Fang L."/>
            <person name="Zhang Z."/>
            <person name="Zhang Y."/>
            <person name="Huang X."/>
            <person name="Su Z."/>
            <person name="Tong W."/>
            <person name="Li J."/>
            <person name="Tong Z."/>
            <person name="Li S."/>
            <person name="Ye J."/>
            <person name="Wang L."/>
            <person name="Fang L."/>
            <person name="Lei T."/>
            <person name="Chen C.-S."/>
            <person name="Chen H.-C."/>
            <person name="Xu Z."/>
            <person name="Li H."/>
            <person name="Huang H."/>
            <person name="Zhang F."/>
            <person name="Xu H."/>
            <person name="Li N."/>
            <person name="Zhao C."/>
            <person name="Li S."/>
            <person name="Dong L."/>
            <person name="Huang Y."/>
            <person name="Li L."/>
            <person name="Xi Y."/>
            <person name="Qi Q."/>
            <person name="Li W."/>
            <person name="Zhang B."/>
            <person name="Hu W."/>
            <person name="Zhang Y."/>
            <person name="Tian X."/>
            <person name="Jiao Y."/>
            <person name="Liang X."/>
            <person name="Jin J."/>
            <person name="Gao L."/>
            <person name="Zheng W."/>
            <person name="Hao B."/>
            <person name="Liu S.-M."/>
            <person name="Wang W."/>
            <person name="Yuan L."/>
            <person name="Cao M."/>
            <person name="McDermott J."/>
            <person name="Samudrala R."/>
            <person name="Wang J."/>
            <person name="Wong G.K.-S."/>
            <person name="Yang H."/>
        </authorList>
    </citation>
    <scope>NUCLEOTIDE SEQUENCE [LARGE SCALE GENOMIC DNA]</scope>
    <source>
        <strain>cv. 93-11</strain>
    </source>
</reference>
<sequence>MPSCCCLLGLGFPSPPSALRILRRRMASRAFQLRLNPLTGDSEWLVVEEEEEEDHHPTPPPKQLLATTSYLDMLNDSARNRAYRRAIEAAVTDPSSRVLDIGAGTGLLSMMAARALAAVGGETRGGSVSACESYLPMGKLMRRVLRANGMENRVKVFHKRSDELKVGDDLDSPADILVSEILDSELLGEGLIPTLQQAYDMLLAKNPKIVPYRATTYGQLVESTFLWKLHDLHNNEANAADGVWLTPGEMERIVSVKPQQHAMQCDALEDEIRLLSEPFKVFEFDFWKRPDSHREANIKIQTTRDGYVHAIISWWVLQLDSAGSIFYSTAPRWARQSSSEGPQRDMKDWCDHWKQCVWFMQGKGIPATEDQVLSLRARHNQTSISYQLNINDEACDRSSKGDHLTLLPERIALYGDKDWRSALINTIKNALTVKSSPTCVVADDSMFLALLISSMSPTSKVIAMYPGLRDKGAAYLRSVADANNFSIDQIQVIGKRASSITADDLKHKKVNLLVGEPFYLGSEGMLPWQNLRFWSVRTLLDSMLSEDAFIMPCKGILKLCAMSLPDLWRSRSSLKDVEGFDHSVVNETLGACGYLPGDQQGPCLPYYVWQCGYTKKLSKVYSLMDFNFSEPIHSCFGKTKIEFSHDGTCHGFAVWIDWVLDERKSVVLTTGPDNRYWKQGVQLFGKPVEVNPGKSVMHVEASFDPSTGEITFSSSSTTCS</sequence>
<keyword id="KW-0489">Methyltransferase</keyword>
<keyword id="KW-1185">Reference proteome</keyword>
<keyword id="KW-0677">Repeat</keyword>
<keyword id="KW-0949">S-adenosyl-L-methionine</keyword>
<keyword id="KW-0808">Transferase</keyword>
<gene>
    <name type="primary">PRMT7</name>
    <name type="ORF">OsI_020562</name>
    <name type="ORF">OsI_21299</name>
</gene>
<protein>
    <recommendedName>
        <fullName>Protein arginine N-methyltransferase 7</fullName>
        <ecNumber>2.1.1.-</ecNumber>
    </recommendedName>
</protein>
<proteinExistence type="inferred from homology"/>
<comment type="function">
    <text evidence="1">Arginine methyltransferase that can both catalyze the formation of omega-N monomethylarginine (MMA) and symmetrical dimethylarginine (sDMA).</text>
</comment>
<comment type="similarity">
    <text evidence="2">Belongs to the class I-like SAM-binding methyltransferase superfamily. Protein arginine N-methyltransferase family. PRMT7 subfamily.</text>
</comment>
<comment type="sequence caution" evidence="3">
    <conflict type="erroneous gene model prediction">
        <sequence resource="EMBL-CDS" id="EEC79835"/>
    </conflict>
</comment>
<organism>
    <name type="scientific">Oryza sativa subsp. indica</name>
    <name type="common">Rice</name>
    <dbReference type="NCBI Taxonomy" id="39946"/>
    <lineage>
        <taxon>Eukaryota</taxon>
        <taxon>Viridiplantae</taxon>
        <taxon>Streptophyta</taxon>
        <taxon>Embryophyta</taxon>
        <taxon>Tracheophyta</taxon>
        <taxon>Spermatophyta</taxon>
        <taxon>Magnoliopsida</taxon>
        <taxon>Liliopsida</taxon>
        <taxon>Poales</taxon>
        <taxon>Poaceae</taxon>
        <taxon>BOP clade</taxon>
        <taxon>Oryzoideae</taxon>
        <taxon>Oryzeae</taxon>
        <taxon>Oryzinae</taxon>
        <taxon>Oryza</taxon>
        <taxon>Oryza sativa</taxon>
    </lineage>
</organism>
<dbReference type="EC" id="2.1.1.-"/>
<dbReference type="EMBL" id="CM000131">
    <property type="protein sequence ID" value="EEC79835.1"/>
    <property type="status" value="ALT_SEQ"/>
    <property type="molecule type" value="Genomic_DNA"/>
</dbReference>
<dbReference type="SMR" id="A2Y8B9"/>
<dbReference type="STRING" id="39946.A2Y8B9"/>
<dbReference type="EnsemblPlants" id="OsKYG_06g0000340.01">
    <property type="protein sequence ID" value="OsKYG_06g0000340.01"/>
    <property type="gene ID" value="OsKYG_06g0000340"/>
</dbReference>
<dbReference type="EnsemblPlants" id="OsPr106_06g0000340.01">
    <property type="protein sequence ID" value="OsPr106_06g0000340.01"/>
    <property type="gene ID" value="OsPr106_06g0000340"/>
</dbReference>
<dbReference type="EnsemblPlants" id="OsZS97_06G000340_01">
    <property type="protein sequence ID" value="OsZS97_06G000340_01"/>
    <property type="gene ID" value="OsZS97_06G000340"/>
</dbReference>
<dbReference type="Gramene" id="OsKYG_06g0000340.01">
    <property type="protein sequence ID" value="OsKYG_06g0000340.01"/>
    <property type="gene ID" value="OsKYG_06g0000340"/>
</dbReference>
<dbReference type="Gramene" id="OsPr106_06g0000340.01">
    <property type="protein sequence ID" value="OsPr106_06g0000340.01"/>
    <property type="gene ID" value="OsPr106_06g0000340"/>
</dbReference>
<dbReference type="Gramene" id="OsZS97_06G000340_01">
    <property type="protein sequence ID" value="OsZS97_06G000340_01"/>
    <property type="gene ID" value="OsZS97_06G000340"/>
</dbReference>
<dbReference type="Proteomes" id="UP000007015">
    <property type="component" value="Chromosome 6"/>
</dbReference>
<dbReference type="GO" id="GO:0042054">
    <property type="term" value="F:histone methyltransferase activity"/>
    <property type="evidence" value="ECO:0007669"/>
    <property type="project" value="TreeGrafter"/>
</dbReference>
<dbReference type="GO" id="GO:0016274">
    <property type="term" value="F:protein-arginine N-methyltransferase activity"/>
    <property type="evidence" value="ECO:0007669"/>
    <property type="project" value="InterPro"/>
</dbReference>
<dbReference type="GO" id="GO:0032259">
    <property type="term" value="P:methylation"/>
    <property type="evidence" value="ECO:0007669"/>
    <property type="project" value="UniProtKB-KW"/>
</dbReference>
<dbReference type="CDD" id="cd02440">
    <property type="entry name" value="AdoMet_MTases"/>
    <property type="match status" value="1"/>
</dbReference>
<dbReference type="FunFam" id="3.40.50.150:FF:000167">
    <property type="entry name" value="Protein arginine N-methyltransferase"/>
    <property type="match status" value="1"/>
</dbReference>
<dbReference type="FunFam" id="2.70.160.11:FF:000013">
    <property type="entry name" value="Protein arginine N-methyltransferase 1.6"/>
    <property type="match status" value="1"/>
</dbReference>
<dbReference type="FunFam" id="2.70.160.11:FF:000017">
    <property type="entry name" value="Protein arginine N-methyltransferase 1.6"/>
    <property type="match status" value="1"/>
</dbReference>
<dbReference type="FunFam" id="3.40.50.150:FF:000070">
    <property type="entry name" value="Protein arginine N-methyltransferase 7"/>
    <property type="match status" value="1"/>
</dbReference>
<dbReference type="Gene3D" id="2.70.160.11">
    <property type="entry name" value="Hnrnp arginine n-methyltransferase1"/>
    <property type="match status" value="2"/>
</dbReference>
<dbReference type="Gene3D" id="3.40.50.150">
    <property type="entry name" value="Vaccinia Virus protein VP39"/>
    <property type="match status" value="2"/>
</dbReference>
<dbReference type="InterPro" id="IPR025799">
    <property type="entry name" value="Arg_MeTrfase"/>
</dbReference>
<dbReference type="InterPro" id="IPR014644">
    <property type="entry name" value="MeTrfase_PRMT7"/>
</dbReference>
<dbReference type="InterPro" id="IPR055135">
    <property type="entry name" value="PRMT_dom"/>
</dbReference>
<dbReference type="InterPro" id="IPR029063">
    <property type="entry name" value="SAM-dependent_MTases_sf"/>
</dbReference>
<dbReference type="PANTHER" id="PTHR11006">
    <property type="entry name" value="PROTEIN ARGININE N-METHYLTRANSFERASE"/>
    <property type="match status" value="1"/>
</dbReference>
<dbReference type="PANTHER" id="PTHR11006:SF4">
    <property type="entry name" value="PROTEIN ARGININE N-METHYLTRANSFERASE 7"/>
    <property type="match status" value="1"/>
</dbReference>
<dbReference type="Pfam" id="PF22528">
    <property type="entry name" value="PRMT_C"/>
    <property type="match status" value="2"/>
</dbReference>
<dbReference type="PIRSF" id="PIRSF036946">
    <property type="entry name" value="Arg_N-mtase"/>
    <property type="match status" value="1"/>
</dbReference>
<dbReference type="SUPFAM" id="SSF53335">
    <property type="entry name" value="S-adenosyl-L-methionine-dependent methyltransferases"/>
    <property type="match status" value="2"/>
</dbReference>
<dbReference type="PROSITE" id="PS51678">
    <property type="entry name" value="SAM_MT_PRMT"/>
    <property type="match status" value="2"/>
</dbReference>
<feature type="chain" id="PRO_0000294002" description="Protein arginine N-methyltransferase 7">
    <location>
        <begin position="1"/>
        <end position="720"/>
    </location>
</feature>
<feature type="domain" description="SAM-dependent MTase PRMT-type 1" evidence="2">
    <location>
        <begin position="54"/>
        <end position="385"/>
    </location>
</feature>
<feature type="domain" description="SAM-dependent MTase PRMT-type 2" evidence="2">
    <location>
        <begin position="387"/>
        <end position="720"/>
    </location>
</feature>
<feature type="active site" evidence="1">
    <location>
        <position position="180"/>
    </location>
</feature>
<feature type="active site" evidence="1">
    <location>
        <position position="189"/>
    </location>
</feature>
<accession>A2Y8B9</accession>
<accession>B8B1M3</accession>
<name>ANM7_ORYSI</name>
<evidence type="ECO:0000250" key="1"/>
<evidence type="ECO:0000255" key="2">
    <source>
        <dbReference type="PROSITE-ProRule" id="PRU01015"/>
    </source>
</evidence>
<evidence type="ECO:0000305" key="3"/>